<protein>
    <recommendedName>
        <fullName evidence="1">Cell division topological specificity factor</fullName>
    </recommendedName>
</protein>
<feature type="chain" id="PRO_1000047777" description="Cell division topological specificity factor">
    <location>
        <begin position="1"/>
        <end position="84"/>
    </location>
</feature>
<dbReference type="EMBL" id="CP000570">
    <property type="protein sequence ID" value="ABN84553.1"/>
    <property type="molecule type" value="Genomic_DNA"/>
</dbReference>
<dbReference type="RefSeq" id="WP_004186076.1">
    <property type="nucleotide sequence ID" value="NC_009074.1"/>
</dbReference>
<dbReference type="SMR" id="A3NCA9"/>
<dbReference type="GeneID" id="93061170"/>
<dbReference type="KEGG" id="bpd:BURPS668_2966"/>
<dbReference type="HOGENOM" id="CLU_137929_2_1_4"/>
<dbReference type="GO" id="GO:0051301">
    <property type="term" value="P:cell division"/>
    <property type="evidence" value="ECO:0007669"/>
    <property type="project" value="UniProtKB-KW"/>
</dbReference>
<dbReference type="GO" id="GO:0032955">
    <property type="term" value="P:regulation of division septum assembly"/>
    <property type="evidence" value="ECO:0007669"/>
    <property type="project" value="InterPro"/>
</dbReference>
<dbReference type="FunFam" id="3.30.1070.10:FF:000001">
    <property type="entry name" value="Cell division topological specificity factor"/>
    <property type="match status" value="1"/>
</dbReference>
<dbReference type="Gene3D" id="3.30.1070.10">
    <property type="entry name" value="Cell division topological specificity factor MinE"/>
    <property type="match status" value="1"/>
</dbReference>
<dbReference type="HAMAP" id="MF_00262">
    <property type="entry name" value="MinE"/>
    <property type="match status" value="1"/>
</dbReference>
<dbReference type="InterPro" id="IPR005527">
    <property type="entry name" value="MinE"/>
</dbReference>
<dbReference type="InterPro" id="IPR036707">
    <property type="entry name" value="MinE_sf"/>
</dbReference>
<dbReference type="NCBIfam" id="TIGR01215">
    <property type="entry name" value="minE"/>
    <property type="match status" value="1"/>
</dbReference>
<dbReference type="NCBIfam" id="NF001422">
    <property type="entry name" value="PRK00296.1"/>
    <property type="match status" value="1"/>
</dbReference>
<dbReference type="NCBIfam" id="NF010595">
    <property type="entry name" value="PRK13989.1"/>
    <property type="match status" value="1"/>
</dbReference>
<dbReference type="Pfam" id="PF03776">
    <property type="entry name" value="MinE"/>
    <property type="match status" value="1"/>
</dbReference>
<dbReference type="SUPFAM" id="SSF55229">
    <property type="entry name" value="Cell division protein MinE topological specificity domain"/>
    <property type="match status" value="1"/>
</dbReference>
<name>MINE_BURP6</name>
<sequence>MSILSFLLGEKKKSAAVAKERLQLIIAHERVGGRPPADYLPALQKELVAVISKYVKISNDDIRVSLERQDDLEVLEVKIEIPQA</sequence>
<proteinExistence type="inferred from homology"/>
<keyword id="KW-0131">Cell cycle</keyword>
<keyword id="KW-0132">Cell division</keyword>
<gene>
    <name evidence="1" type="primary">minE</name>
    <name type="ordered locus">BURPS668_2966</name>
</gene>
<organism>
    <name type="scientific">Burkholderia pseudomallei (strain 668)</name>
    <dbReference type="NCBI Taxonomy" id="320373"/>
    <lineage>
        <taxon>Bacteria</taxon>
        <taxon>Pseudomonadati</taxon>
        <taxon>Pseudomonadota</taxon>
        <taxon>Betaproteobacteria</taxon>
        <taxon>Burkholderiales</taxon>
        <taxon>Burkholderiaceae</taxon>
        <taxon>Burkholderia</taxon>
        <taxon>pseudomallei group</taxon>
    </lineage>
</organism>
<accession>A3NCA9</accession>
<evidence type="ECO:0000255" key="1">
    <source>
        <dbReference type="HAMAP-Rule" id="MF_00262"/>
    </source>
</evidence>
<reference key="1">
    <citation type="journal article" date="2010" name="Genome Biol. Evol.">
        <title>Continuing evolution of Burkholderia mallei through genome reduction and large-scale rearrangements.</title>
        <authorList>
            <person name="Losada L."/>
            <person name="Ronning C.M."/>
            <person name="DeShazer D."/>
            <person name="Woods D."/>
            <person name="Fedorova N."/>
            <person name="Kim H.S."/>
            <person name="Shabalina S.A."/>
            <person name="Pearson T.R."/>
            <person name="Brinkac L."/>
            <person name="Tan P."/>
            <person name="Nandi T."/>
            <person name="Crabtree J."/>
            <person name="Badger J."/>
            <person name="Beckstrom-Sternberg S."/>
            <person name="Saqib M."/>
            <person name="Schutzer S.E."/>
            <person name="Keim P."/>
            <person name="Nierman W.C."/>
        </authorList>
    </citation>
    <scope>NUCLEOTIDE SEQUENCE [LARGE SCALE GENOMIC DNA]</scope>
    <source>
        <strain>668</strain>
    </source>
</reference>
<comment type="function">
    <text evidence="1">Prevents the cell division inhibition by proteins MinC and MinD at internal division sites while permitting inhibition at polar sites. This ensures cell division at the proper site by restricting the formation of a division septum at the midpoint of the long axis of the cell.</text>
</comment>
<comment type="similarity">
    <text evidence="1">Belongs to the MinE family.</text>
</comment>